<reference key="1">
    <citation type="submission" date="2007-04" db="EMBL/GenBank/DDBJ databases">
        <title>Genome sequence of the thermophilic hydrogen-producing bacterium Caldicellulosiruptor saccharolyticus DSM 8903.</title>
        <authorList>
            <person name="Copeland A."/>
            <person name="Lucas S."/>
            <person name="Lapidus A."/>
            <person name="Barry K."/>
            <person name="Detter J.C."/>
            <person name="Glavina del Rio T."/>
            <person name="Hammon N."/>
            <person name="Israni S."/>
            <person name="Dalin E."/>
            <person name="Tice H."/>
            <person name="Pitluck S."/>
            <person name="Kiss H."/>
            <person name="Brettin T."/>
            <person name="Bruce D."/>
            <person name="Han C."/>
            <person name="Schmutz J."/>
            <person name="Larimer F."/>
            <person name="Land M."/>
            <person name="Hauser L."/>
            <person name="Kyrpides N."/>
            <person name="Lykidis A."/>
            <person name="van de Werken H.J.G."/>
            <person name="Verhaart M.R.A."/>
            <person name="VanFossen A.L."/>
            <person name="Lewis D.L."/>
            <person name="Nichols J.D."/>
            <person name="Goorissen H.P."/>
            <person name="van Niel E.W.J."/>
            <person name="Stams F.J.M."/>
            <person name="Willquist K.U."/>
            <person name="Ward D.E."/>
            <person name="van der Oost J."/>
            <person name="Kelly R.M."/>
            <person name="Kengen S.M.W."/>
            <person name="Richardson P."/>
        </authorList>
    </citation>
    <scope>NUCLEOTIDE SEQUENCE [LARGE SCALE GENOMIC DNA]</scope>
    <source>
        <strain>ATCC 43494 / DSM 8903 / Tp8T 6331</strain>
    </source>
</reference>
<sequence>MIFNIGIDIVEVERFKNIKRFDSFLKRVFTQKELEYIRSKNFNMLTIAGYFAAKEAVAKALSTGIVFGFKDIEIQKDTNGCPKVKLYNRAKEICENLKITNIVLSISHQNSVAVACAIAEKEE</sequence>
<evidence type="ECO:0000255" key="1">
    <source>
        <dbReference type="HAMAP-Rule" id="MF_00101"/>
    </source>
</evidence>
<gene>
    <name evidence="1" type="primary">acpS</name>
    <name type="ordered locus">Csac_1038</name>
</gene>
<protein>
    <recommendedName>
        <fullName evidence="1">Holo-[acyl-carrier-protein] synthase</fullName>
        <shortName evidence="1">Holo-ACP synthase</shortName>
        <ecNumber evidence="1">2.7.8.7</ecNumber>
    </recommendedName>
    <alternativeName>
        <fullName evidence="1">4'-phosphopantetheinyl transferase AcpS</fullName>
    </alternativeName>
</protein>
<accession>A4XIB7</accession>
<name>ACPS_CALS8</name>
<keyword id="KW-0963">Cytoplasm</keyword>
<keyword id="KW-0275">Fatty acid biosynthesis</keyword>
<keyword id="KW-0276">Fatty acid metabolism</keyword>
<keyword id="KW-0444">Lipid biosynthesis</keyword>
<keyword id="KW-0443">Lipid metabolism</keyword>
<keyword id="KW-0460">Magnesium</keyword>
<keyword id="KW-0479">Metal-binding</keyword>
<keyword id="KW-0808">Transferase</keyword>
<comment type="function">
    <text evidence="1">Transfers the 4'-phosphopantetheine moiety from coenzyme A to a Ser of acyl-carrier-protein.</text>
</comment>
<comment type="catalytic activity">
    <reaction evidence="1">
        <text>apo-[ACP] + CoA = holo-[ACP] + adenosine 3',5'-bisphosphate + H(+)</text>
        <dbReference type="Rhea" id="RHEA:12068"/>
        <dbReference type="Rhea" id="RHEA-COMP:9685"/>
        <dbReference type="Rhea" id="RHEA-COMP:9690"/>
        <dbReference type="ChEBI" id="CHEBI:15378"/>
        <dbReference type="ChEBI" id="CHEBI:29999"/>
        <dbReference type="ChEBI" id="CHEBI:57287"/>
        <dbReference type="ChEBI" id="CHEBI:58343"/>
        <dbReference type="ChEBI" id="CHEBI:64479"/>
        <dbReference type="EC" id="2.7.8.7"/>
    </reaction>
</comment>
<comment type="cofactor">
    <cofactor evidence="1">
        <name>Mg(2+)</name>
        <dbReference type="ChEBI" id="CHEBI:18420"/>
    </cofactor>
</comment>
<comment type="subcellular location">
    <subcellularLocation>
        <location evidence="1">Cytoplasm</location>
    </subcellularLocation>
</comment>
<comment type="similarity">
    <text evidence="1">Belongs to the P-Pant transferase superfamily. AcpS family.</text>
</comment>
<dbReference type="EC" id="2.7.8.7" evidence="1"/>
<dbReference type="EMBL" id="CP000679">
    <property type="protein sequence ID" value="ABP66652.1"/>
    <property type="molecule type" value="Genomic_DNA"/>
</dbReference>
<dbReference type="RefSeq" id="WP_011916599.1">
    <property type="nucleotide sequence ID" value="NC_009437.1"/>
</dbReference>
<dbReference type="SMR" id="A4XIB7"/>
<dbReference type="STRING" id="351627.Csac_1038"/>
<dbReference type="KEGG" id="csc:Csac_1038"/>
<dbReference type="eggNOG" id="COG0736">
    <property type="taxonomic scope" value="Bacteria"/>
</dbReference>
<dbReference type="HOGENOM" id="CLU_089696_0_2_9"/>
<dbReference type="OrthoDB" id="517356at2"/>
<dbReference type="Proteomes" id="UP000000256">
    <property type="component" value="Chromosome"/>
</dbReference>
<dbReference type="GO" id="GO:0005829">
    <property type="term" value="C:cytosol"/>
    <property type="evidence" value="ECO:0007669"/>
    <property type="project" value="TreeGrafter"/>
</dbReference>
<dbReference type="GO" id="GO:0008897">
    <property type="term" value="F:holo-[acyl-carrier-protein] synthase activity"/>
    <property type="evidence" value="ECO:0007669"/>
    <property type="project" value="UniProtKB-UniRule"/>
</dbReference>
<dbReference type="GO" id="GO:0000287">
    <property type="term" value="F:magnesium ion binding"/>
    <property type="evidence" value="ECO:0007669"/>
    <property type="project" value="UniProtKB-UniRule"/>
</dbReference>
<dbReference type="GO" id="GO:0006633">
    <property type="term" value="P:fatty acid biosynthetic process"/>
    <property type="evidence" value="ECO:0007669"/>
    <property type="project" value="UniProtKB-UniRule"/>
</dbReference>
<dbReference type="GO" id="GO:0019878">
    <property type="term" value="P:lysine biosynthetic process via aminoadipic acid"/>
    <property type="evidence" value="ECO:0007669"/>
    <property type="project" value="TreeGrafter"/>
</dbReference>
<dbReference type="Gene3D" id="3.90.470.20">
    <property type="entry name" value="4'-phosphopantetheinyl transferase domain"/>
    <property type="match status" value="1"/>
</dbReference>
<dbReference type="HAMAP" id="MF_00101">
    <property type="entry name" value="AcpS"/>
    <property type="match status" value="1"/>
</dbReference>
<dbReference type="InterPro" id="IPR008278">
    <property type="entry name" value="4-PPantetheinyl_Trfase_dom"/>
</dbReference>
<dbReference type="InterPro" id="IPR037143">
    <property type="entry name" value="4-PPantetheinyl_Trfase_dom_sf"/>
</dbReference>
<dbReference type="InterPro" id="IPR002582">
    <property type="entry name" value="ACPS"/>
</dbReference>
<dbReference type="InterPro" id="IPR050559">
    <property type="entry name" value="P-Pant_transferase_sf"/>
</dbReference>
<dbReference type="InterPro" id="IPR004568">
    <property type="entry name" value="Ppantetheine-prot_Trfase_dom"/>
</dbReference>
<dbReference type="NCBIfam" id="TIGR00516">
    <property type="entry name" value="acpS"/>
    <property type="match status" value="1"/>
</dbReference>
<dbReference type="NCBIfam" id="TIGR00556">
    <property type="entry name" value="pantethn_trn"/>
    <property type="match status" value="1"/>
</dbReference>
<dbReference type="PANTHER" id="PTHR12215:SF10">
    <property type="entry name" value="L-AMINOADIPATE-SEMIALDEHYDE DEHYDROGENASE-PHOSPHOPANTETHEINYL TRANSFERASE"/>
    <property type="match status" value="1"/>
</dbReference>
<dbReference type="PANTHER" id="PTHR12215">
    <property type="entry name" value="PHOSPHOPANTETHEINE TRANSFERASE"/>
    <property type="match status" value="1"/>
</dbReference>
<dbReference type="Pfam" id="PF01648">
    <property type="entry name" value="ACPS"/>
    <property type="match status" value="1"/>
</dbReference>
<dbReference type="SUPFAM" id="SSF56214">
    <property type="entry name" value="4'-phosphopantetheinyl transferase"/>
    <property type="match status" value="1"/>
</dbReference>
<proteinExistence type="inferred from homology"/>
<feature type="chain" id="PRO_1000008404" description="Holo-[acyl-carrier-protein] synthase">
    <location>
        <begin position="1"/>
        <end position="123"/>
    </location>
</feature>
<feature type="binding site" evidence="1">
    <location>
        <position position="8"/>
    </location>
    <ligand>
        <name>Mg(2+)</name>
        <dbReference type="ChEBI" id="CHEBI:18420"/>
    </ligand>
</feature>
<feature type="binding site" evidence="1">
    <location>
        <position position="55"/>
    </location>
    <ligand>
        <name>Mg(2+)</name>
        <dbReference type="ChEBI" id="CHEBI:18420"/>
    </ligand>
</feature>
<organism>
    <name type="scientific">Caldicellulosiruptor saccharolyticus (strain ATCC 43494 / DSM 8903 / Tp8T 6331)</name>
    <dbReference type="NCBI Taxonomy" id="351627"/>
    <lineage>
        <taxon>Bacteria</taxon>
        <taxon>Bacillati</taxon>
        <taxon>Bacillota</taxon>
        <taxon>Bacillota incertae sedis</taxon>
        <taxon>Caldicellulosiruptorales</taxon>
        <taxon>Caldicellulosiruptoraceae</taxon>
        <taxon>Caldicellulosiruptor</taxon>
    </lineage>
</organism>